<feature type="chain" id="PRO_0000270882" description="Bifunctional enzyme BirA/CoaX">
    <location>
        <begin position="1"/>
        <end position="592"/>
    </location>
</feature>
<feature type="domain" description="BPL/LPL catalytic" evidence="3">
    <location>
        <begin position="83"/>
        <end position="259"/>
    </location>
</feature>
<feature type="region of interest" description="Biotin--protein ligase">
    <location>
        <begin position="1"/>
        <end position="329"/>
    </location>
</feature>
<feature type="region of interest" description="Type III pantothenate kinase">
    <location>
        <begin position="336"/>
        <end position="592"/>
    </location>
</feature>
<feature type="active site" description="Proton acceptor" evidence="2">
    <location>
        <position position="435"/>
    </location>
</feature>
<feature type="binding site" evidence="1">
    <location>
        <begin position="344"/>
        <end position="351"/>
    </location>
    <ligand>
        <name>ATP</name>
        <dbReference type="ChEBI" id="CHEBI:30616"/>
    </ligand>
</feature>
<feature type="binding site" evidence="1">
    <location>
        <position position="426"/>
    </location>
    <ligand>
        <name>substrate</name>
    </ligand>
</feature>
<feature type="binding site" evidence="1">
    <location>
        <begin position="433"/>
        <end position="436"/>
    </location>
    <ligand>
        <name>substrate</name>
    </ligand>
</feature>
<feature type="binding site" evidence="2">
    <location>
        <position position="458"/>
    </location>
    <ligand>
        <name>ATP</name>
        <dbReference type="ChEBI" id="CHEBI:30616"/>
    </ligand>
</feature>
<feature type="binding site" evidence="1">
    <location>
        <position position="508"/>
    </location>
    <ligand>
        <name>substrate</name>
    </ligand>
</feature>
<comment type="function">
    <text evidence="1">Activates biotin to form biotinyl-5'-adenylate and transfers the biotin moiety to biotin-accepting proteins.</text>
</comment>
<comment type="function">
    <text evidence="1">Catalyzes the phosphorylation of pantothenate (Pan), the first step in CoA biosynthesis.</text>
</comment>
<comment type="catalytic activity">
    <reaction>
        <text>biotin + L-lysyl-[protein] + ATP = N(6)-biotinyl-L-lysyl-[protein] + AMP + diphosphate + H(+)</text>
        <dbReference type="Rhea" id="RHEA:11756"/>
        <dbReference type="Rhea" id="RHEA-COMP:9752"/>
        <dbReference type="Rhea" id="RHEA-COMP:10505"/>
        <dbReference type="ChEBI" id="CHEBI:15378"/>
        <dbReference type="ChEBI" id="CHEBI:29969"/>
        <dbReference type="ChEBI" id="CHEBI:30616"/>
        <dbReference type="ChEBI" id="CHEBI:33019"/>
        <dbReference type="ChEBI" id="CHEBI:57586"/>
        <dbReference type="ChEBI" id="CHEBI:83144"/>
        <dbReference type="ChEBI" id="CHEBI:456215"/>
        <dbReference type="EC" id="6.3.4.15"/>
    </reaction>
</comment>
<comment type="catalytic activity">
    <reaction>
        <text>(R)-pantothenate + ATP = (R)-4'-phosphopantothenate + ADP + H(+)</text>
        <dbReference type="Rhea" id="RHEA:16373"/>
        <dbReference type="ChEBI" id="CHEBI:10986"/>
        <dbReference type="ChEBI" id="CHEBI:15378"/>
        <dbReference type="ChEBI" id="CHEBI:29032"/>
        <dbReference type="ChEBI" id="CHEBI:30616"/>
        <dbReference type="ChEBI" id="CHEBI:456216"/>
        <dbReference type="EC" id="2.7.1.33"/>
    </reaction>
</comment>
<comment type="cofactor">
    <cofactor evidence="1">
        <name>NH4(+)</name>
        <dbReference type="ChEBI" id="CHEBI:28938"/>
    </cofactor>
    <cofactor evidence="1">
        <name>K(+)</name>
        <dbReference type="ChEBI" id="CHEBI:29103"/>
    </cofactor>
    <text evidence="1">A monovalent cation. Ammonium or potassium.</text>
</comment>
<comment type="pathway">
    <text>Cofactor biosynthesis; coenzyme A biosynthesis; CoA from (R)-pantothenate: step 1/5.</text>
</comment>
<comment type="subcellular location">
    <subcellularLocation>
        <location evidence="4">Cytoplasm</location>
    </subcellularLocation>
</comment>
<comment type="similarity">
    <text evidence="4">In the N-terminal section; belongs to the biotin--protein ligase family.</text>
</comment>
<comment type="similarity">
    <text evidence="4">In the C-terminal section; belongs to the type III pantothenate kinase family.</text>
</comment>
<evidence type="ECO:0000250" key="1"/>
<evidence type="ECO:0000255" key="2"/>
<evidence type="ECO:0000255" key="3">
    <source>
        <dbReference type="PROSITE-ProRule" id="PRU01067"/>
    </source>
</evidence>
<evidence type="ECO:0000305" key="4"/>
<accession>Q5F5C8</accession>
<name>BICOA_NEIG1</name>
<keyword id="KW-0067">ATP-binding</keyword>
<keyword id="KW-0092">Biotin</keyword>
<keyword id="KW-0173">Coenzyme A biosynthesis</keyword>
<keyword id="KW-0963">Cytoplasm</keyword>
<keyword id="KW-0418">Kinase</keyword>
<keyword id="KW-0436">Ligase</keyword>
<keyword id="KW-0511">Multifunctional enzyme</keyword>
<keyword id="KW-0547">Nucleotide-binding</keyword>
<keyword id="KW-0630">Potassium</keyword>
<keyword id="KW-1185">Reference proteome</keyword>
<keyword id="KW-0808">Transferase</keyword>
<sequence>MTVLKPSHWRVLAELADGLPQHVSQLAREADMKPQQLNGFWQQMPAHIRGLLRQHDGYWRLVRPLAVFDAEGLRDLGERSGFQTALKHECASSNDEILELARIAPDKAHKTICVTHLQSKGRGRQGRKWSHRLGECLMFSFGWAFDRPQYELGSLSPVAALACRRALGCLGLETQIKWPNDLVVGRDKLGGILIETVRAGGKTVAVVGIGINFVLPKEVENAASVQSLFQTASRRGNADAAVLLETLLAELGAVLEQYAEEGFAPFLNEYETANRDHGKAVLLLRDGETVCEGTVKGVDGRGVLHLETAEGEQTVVSGEISLRPDNRSVSVPKRPDSERFLLLEGGNSRLKWAWVENGTFATVGSAPYRDLSPLGAEWAEKADGNVRIVGCAVCGESKKAQVKEQLARKIEWLPSSAQALGIRNHYRHPEEHGSDRWFNALGSRRFSRNACVVVSCGTAVTVDALTDDGHYLGGTIMPGFHLMKESLAVRTANLNRPAGKRYPFPTTTGNAVASGMMDAVCGSIMMMHGRLKEKNGAGKPVDVIITGGGAAKVAEALPPAFLAENTVRVADNLVIHGLLNLIAAEGGESEHA</sequence>
<protein>
    <recommendedName>
        <fullName>Bifunctional enzyme BirA/CoaX</fullName>
    </recommendedName>
    <domain>
        <recommendedName>
            <fullName>Biotin--[acetyl-CoA-carboxylase] synthetase</fullName>
            <ecNumber>6.3.4.15</ecNumber>
        </recommendedName>
        <alternativeName>
            <fullName>Biotin--protein ligase</fullName>
        </alternativeName>
    </domain>
    <domain>
        <recommendedName>
            <fullName>Type III pantothenate kinase</fullName>
            <ecNumber>2.7.1.33</ecNumber>
        </recommendedName>
        <alternativeName>
            <fullName>PanK-III</fullName>
        </alternativeName>
        <alternativeName>
            <fullName>Pantothenic acid kinase</fullName>
        </alternativeName>
    </domain>
</protein>
<organism>
    <name type="scientific">Neisseria gonorrhoeae (strain ATCC 700825 / FA 1090)</name>
    <dbReference type="NCBI Taxonomy" id="242231"/>
    <lineage>
        <taxon>Bacteria</taxon>
        <taxon>Pseudomonadati</taxon>
        <taxon>Pseudomonadota</taxon>
        <taxon>Betaproteobacteria</taxon>
        <taxon>Neisseriales</taxon>
        <taxon>Neisseriaceae</taxon>
        <taxon>Neisseria</taxon>
    </lineage>
</organism>
<dbReference type="EC" id="6.3.4.15"/>
<dbReference type="EC" id="2.7.1.33"/>
<dbReference type="EMBL" id="AE004969">
    <property type="protein sequence ID" value="AAW90609.1"/>
    <property type="molecule type" value="Genomic_DNA"/>
</dbReference>
<dbReference type="RefSeq" id="WP_010951380.1">
    <property type="nucleotide sequence ID" value="NC_002946.2"/>
</dbReference>
<dbReference type="RefSeq" id="YP_209021.1">
    <property type="nucleotide sequence ID" value="NC_002946.2"/>
</dbReference>
<dbReference type="SMR" id="Q5F5C8"/>
<dbReference type="STRING" id="242231.NGO_2001"/>
<dbReference type="KEGG" id="ngo:NGO_2001"/>
<dbReference type="PATRIC" id="fig|242231.10.peg.2413"/>
<dbReference type="HOGENOM" id="CLU_476347_0_0_4"/>
<dbReference type="UniPathway" id="UPA00241">
    <property type="reaction ID" value="UER00352"/>
</dbReference>
<dbReference type="Proteomes" id="UP000000535">
    <property type="component" value="Chromosome"/>
</dbReference>
<dbReference type="GO" id="GO:0005737">
    <property type="term" value="C:cytoplasm"/>
    <property type="evidence" value="ECO:0007669"/>
    <property type="project" value="UniProtKB-SubCell"/>
</dbReference>
<dbReference type="GO" id="GO:0005524">
    <property type="term" value="F:ATP binding"/>
    <property type="evidence" value="ECO:0007669"/>
    <property type="project" value="UniProtKB-UniRule"/>
</dbReference>
<dbReference type="GO" id="GO:0004077">
    <property type="term" value="F:biotin--[biotin carboxyl-carrier protein] ligase activity"/>
    <property type="evidence" value="ECO:0007669"/>
    <property type="project" value="UniProtKB-EC"/>
</dbReference>
<dbReference type="GO" id="GO:0004594">
    <property type="term" value="F:pantothenate kinase activity"/>
    <property type="evidence" value="ECO:0007669"/>
    <property type="project" value="UniProtKB-UniRule"/>
</dbReference>
<dbReference type="GO" id="GO:0015937">
    <property type="term" value="P:coenzyme A biosynthetic process"/>
    <property type="evidence" value="ECO:0007669"/>
    <property type="project" value="UniProtKB-UniRule"/>
</dbReference>
<dbReference type="GO" id="GO:0036211">
    <property type="term" value="P:protein modification process"/>
    <property type="evidence" value="ECO:0007669"/>
    <property type="project" value="InterPro"/>
</dbReference>
<dbReference type="CDD" id="cd24015">
    <property type="entry name" value="ASKHA_NBD_PanK-III"/>
    <property type="match status" value="1"/>
</dbReference>
<dbReference type="CDD" id="cd16442">
    <property type="entry name" value="BPL"/>
    <property type="match status" value="1"/>
</dbReference>
<dbReference type="Gene3D" id="2.30.30.100">
    <property type="match status" value="1"/>
</dbReference>
<dbReference type="Gene3D" id="3.30.420.40">
    <property type="match status" value="2"/>
</dbReference>
<dbReference type="Gene3D" id="3.30.930.10">
    <property type="entry name" value="Bira Bifunctional Protein, Domain 2"/>
    <property type="match status" value="1"/>
</dbReference>
<dbReference type="HAMAP" id="MF_01274">
    <property type="entry name" value="Pantothen_kinase_3"/>
    <property type="match status" value="1"/>
</dbReference>
<dbReference type="InterPro" id="IPR045864">
    <property type="entry name" value="aa-tRNA-synth_II/BPL/LPL"/>
</dbReference>
<dbReference type="InterPro" id="IPR043129">
    <property type="entry name" value="ATPase_NBD"/>
</dbReference>
<dbReference type="InterPro" id="IPR004408">
    <property type="entry name" value="Biotin_CoA_COase_ligase"/>
</dbReference>
<dbReference type="InterPro" id="IPR003142">
    <property type="entry name" value="BPL_C"/>
</dbReference>
<dbReference type="InterPro" id="IPR004143">
    <property type="entry name" value="BPL_LPL_catalytic"/>
</dbReference>
<dbReference type="InterPro" id="IPR008988">
    <property type="entry name" value="Transcriptional_repressor_C"/>
</dbReference>
<dbReference type="InterPro" id="IPR004619">
    <property type="entry name" value="Type_III_PanK"/>
</dbReference>
<dbReference type="NCBIfam" id="TIGR00671">
    <property type="entry name" value="baf"/>
    <property type="match status" value="1"/>
</dbReference>
<dbReference type="NCBIfam" id="TIGR00121">
    <property type="entry name" value="birA_ligase"/>
    <property type="match status" value="1"/>
</dbReference>
<dbReference type="NCBIfam" id="NF009862">
    <property type="entry name" value="PRK13325.1"/>
    <property type="match status" value="1"/>
</dbReference>
<dbReference type="PANTHER" id="PTHR12835">
    <property type="entry name" value="BIOTIN PROTEIN LIGASE"/>
    <property type="match status" value="1"/>
</dbReference>
<dbReference type="PANTHER" id="PTHR12835:SF5">
    <property type="entry name" value="BIOTIN--PROTEIN LIGASE"/>
    <property type="match status" value="1"/>
</dbReference>
<dbReference type="Pfam" id="PF02237">
    <property type="entry name" value="BPL_C"/>
    <property type="match status" value="1"/>
</dbReference>
<dbReference type="Pfam" id="PF03099">
    <property type="entry name" value="BPL_LplA_LipB"/>
    <property type="match status" value="1"/>
</dbReference>
<dbReference type="Pfam" id="PF03309">
    <property type="entry name" value="Pan_kinase"/>
    <property type="match status" value="1"/>
</dbReference>
<dbReference type="SUPFAM" id="SSF53067">
    <property type="entry name" value="Actin-like ATPase domain"/>
    <property type="match status" value="2"/>
</dbReference>
<dbReference type="SUPFAM" id="SSF50037">
    <property type="entry name" value="C-terminal domain of transcriptional repressors"/>
    <property type="match status" value="1"/>
</dbReference>
<dbReference type="SUPFAM" id="SSF55681">
    <property type="entry name" value="Class II aaRS and biotin synthetases"/>
    <property type="match status" value="1"/>
</dbReference>
<dbReference type="PROSITE" id="PS51733">
    <property type="entry name" value="BPL_LPL_CATALYTIC"/>
    <property type="match status" value="1"/>
</dbReference>
<proteinExistence type="inferred from homology"/>
<gene>
    <name type="primary">birA/coaX</name>
    <name type="ordered locus">NGO_2001</name>
</gene>
<reference key="1">
    <citation type="submission" date="2003-03" db="EMBL/GenBank/DDBJ databases">
        <title>The complete genome sequence of Neisseria gonorrhoeae.</title>
        <authorList>
            <person name="Lewis L.A."/>
            <person name="Gillaspy A.F."/>
            <person name="McLaughlin R.E."/>
            <person name="Gipson M."/>
            <person name="Ducey T.F."/>
            <person name="Ownbey T."/>
            <person name="Hartman K."/>
            <person name="Nydick C."/>
            <person name="Carson M.B."/>
            <person name="Vaughn J."/>
            <person name="Thomson C."/>
            <person name="Song L."/>
            <person name="Lin S."/>
            <person name="Yuan X."/>
            <person name="Najar F."/>
            <person name="Zhan M."/>
            <person name="Ren Q."/>
            <person name="Zhu H."/>
            <person name="Qi S."/>
            <person name="Kenton S.M."/>
            <person name="Lai H."/>
            <person name="White J.D."/>
            <person name="Clifton S."/>
            <person name="Roe B.A."/>
            <person name="Dyer D.W."/>
        </authorList>
    </citation>
    <scope>NUCLEOTIDE SEQUENCE [LARGE SCALE GENOMIC DNA]</scope>
    <source>
        <strain>ATCC 700825 / FA 1090</strain>
    </source>
</reference>